<comment type="function">
    <text>Pulmonary surfactant-associated proteins promote alveolar stability by lowering the surface tension at the air-liquid interface in the peripheral air spaces. SP-B increases the collapse pressure of palmitic acid to nearly 70 millinewtons per meter.</text>
</comment>
<comment type="subunit">
    <text>Homodimer; disulfide-linked.</text>
</comment>
<comment type="subcellular location">
    <subcellularLocation>
        <location>Secreted</location>
        <location>Extracellular space</location>
        <location>Surface film</location>
    </subcellularLocation>
</comment>
<comment type="miscellaneous">
    <text>Pulmonary surfactant consists of 90% lipid and 10% protein. There are 4 surfactant-associated proteins: 2 collagenous, carbohydrate-binding glycoproteins (SP-A and SP-D) and 2 small hydrophobic proteins (SP-B and SP-C).</text>
</comment>
<accession>P50405</accession>
<name>PSPB_MOUSE</name>
<protein>
    <recommendedName>
        <fullName>Pulmonary surfactant-associated protein B</fullName>
        <shortName>SP-B</shortName>
    </recommendedName>
    <alternativeName>
        <fullName>Pulmonary surfactant-associated proteolipid SPL(Phe)</fullName>
    </alternativeName>
</protein>
<organism>
    <name type="scientific">Mus musculus</name>
    <name type="common">Mouse</name>
    <dbReference type="NCBI Taxonomy" id="10090"/>
    <lineage>
        <taxon>Eukaryota</taxon>
        <taxon>Metazoa</taxon>
        <taxon>Chordata</taxon>
        <taxon>Craniata</taxon>
        <taxon>Vertebrata</taxon>
        <taxon>Euteleostomi</taxon>
        <taxon>Mammalia</taxon>
        <taxon>Eutheria</taxon>
        <taxon>Euarchontoglires</taxon>
        <taxon>Glires</taxon>
        <taxon>Rodentia</taxon>
        <taxon>Myomorpha</taxon>
        <taxon>Muroidea</taxon>
        <taxon>Muridae</taxon>
        <taxon>Murinae</taxon>
        <taxon>Mus</taxon>
        <taxon>Mus</taxon>
    </lineage>
</organism>
<gene>
    <name type="primary">Sftpb</name>
    <name type="synonym">Sftp3</name>
</gene>
<dbReference type="EMBL" id="S78114">
    <property type="protein sequence ID" value="AAB34846.2"/>
    <property type="molecule type" value="Genomic_DNA"/>
</dbReference>
<dbReference type="RefSeq" id="NP_680088.1">
    <property type="nucleotide sequence ID" value="NM_147779.3"/>
</dbReference>
<dbReference type="PDB" id="6VYN">
    <property type="method" value="X-ray"/>
    <property type="resolution" value="2.20 A"/>
    <property type="chains" value="A/B/C/D/E/F/G/H=61-146"/>
</dbReference>
<dbReference type="PDB" id="6VZ0">
    <property type="method" value="X-ray"/>
    <property type="resolution" value="1.75 A"/>
    <property type="chains" value="A/B=292-367"/>
</dbReference>
<dbReference type="PDB" id="6VZD">
    <property type="method" value="X-ray"/>
    <property type="resolution" value="1.88 A"/>
    <property type="chains" value="A/B/C/E=61-146"/>
</dbReference>
<dbReference type="PDB" id="6VZE">
    <property type="method" value="X-ray"/>
    <property type="resolution" value="1.90 A"/>
    <property type="chains" value="A/B/C/D/E/F/G/H=292-367"/>
</dbReference>
<dbReference type="PDB" id="6W1B">
    <property type="method" value="X-ray"/>
    <property type="resolution" value="2.31 A"/>
    <property type="chains" value="A/B/C/D/E/F/G/H=61-146"/>
</dbReference>
<dbReference type="PDB" id="7MBK">
    <property type="method" value="X-ray"/>
    <property type="resolution" value="2.17 A"/>
    <property type="chains" value="A/B=61-146"/>
</dbReference>
<dbReference type="PDBsum" id="6VYN"/>
<dbReference type="PDBsum" id="6VZ0"/>
<dbReference type="PDBsum" id="6VZD"/>
<dbReference type="PDBsum" id="6VZE"/>
<dbReference type="PDBsum" id="6W1B"/>
<dbReference type="PDBsum" id="7MBK"/>
<dbReference type="SMR" id="P50405"/>
<dbReference type="FunCoup" id="P50405">
    <property type="interactions" value="39"/>
</dbReference>
<dbReference type="STRING" id="10090.ENSMUSP00000138695"/>
<dbReference type="GlyCosmos" id="P50405">
    <property type="glycosylation" value="1 site, No reported glycans"/>
</dbReference>
<dbReference type="GlyGen" id="P50405">
    <property type="glycosylation" value="1 site"/>
</dbReference>
<dbReference type="PhosphoSitePlus" id="P50405"/>
<dbReference type="CPTAC" id="non-CPTAC-3999"/>
<dbReference type="jPOST" id="P50405"/>
<dbReference type="PaxDb" id="10090-ENSMUSP00000066805"/>
<dbReference type="ProteomicsDB" id="301867"/>
<dbReference type="Antibodypedia" id="31946">
    <property type="antibodies" value="363 antibodies from 31 providers"/>
</dbReference>
<dbReference type="DNASU" id="20388"/>
<dbReference type="Ensembl" id="ENSMUST00000182014.10">
    <property type="protein sequence ID" value="ENSMUSP00000138204.4"/>
    <property type="gene ID" value="ENSMUSG00000056370.18"/>
</dbReference>
<dbReference type="GeneID" id="20388"/>
<dbReference type="KEGG" id="mmu:20388"/>
<dbReference type="UCSC" id="uc057adr.1">
    <property type="organism name" value="mouse"/>
</dbReference>
<dbReference type="AGR" id="MGI:109516"/>
<dbReference type="CTD" id="6439"/>
<dbReference type="MGI" id="MGI:109516">
    <property type="gene designation" value="Sftpb"/>
</dbReference>
<dbReference type="eggNOG" id="KOG1340">
    <property type="taxonomic scope" value="Eukaryota"/>
</dbReference>
<dbReference type="InParanoid" id="P50405"/>
<dbReference type="OMA" id="PKFWCQS"/>
<dbReference type="OrthoDB" id="8889685at2759"/>
<dbReference type="PhylomeDB" id="P50405"/>
<dbReference type="Reactome" id="R-MMU-5683826">
    <property type="pathway name" value="Surfactant metabolism"/>
</dbReference>
<dbReference type="BioGRID-ORCS" id="20388">
    <property type="hits" value="2 hits in 58 CRISPR screens"/>
</dbReference>
<dbReference type="ChiTaRS" id="Sftpb">
    <property type="organism name" value="mouse"/>
</dbReference>
<dbReference type="PRO" id="PR:P50405"/>
<dbReference type="Proteomes" id="UP000000589">
    <property type="component" value="Chromosome 6"/>
</dbReference>
<dbReference type="RNAct" id="P50405">
    <property type="molecule type" value="protein"/>
</dbReference>
<dbReference type="Bgee" id="ENSMUSG00000056370">
    <property type="expression patterns" value="Expressed in lung and 25 other cell types or tissues"/>
</dbReference>
<dbReference type="ExpressionAtlas" id="P50405">
    <property type="expression patterns" value="baseline and differential"/>
</dbReference>
<dbReference type="GO" id="GO:0062023">
    <property type="term" value="C:collagen-containing extracellular matrix"/>
    <property type="evidence" value="ECO:0007005"/>
    <property type="project" value="BHF-UCL"/>
</dbReference>
<dbReference type="GO" id="GO:0005737">
    <property type="term" value="C:cytoplasm"/>
    <property type="evidence" value="ECO:0000314"/>
    <property type="project" value="MGI"/>
</dbReference>
<dbReference type="GO" id="GO:0005576">
    <property type="term" value="C:extracellular region"/>
    <property type="evidence" value="ECO:0007669"/>
    <property type="project" value="UniProtKB-SubCell"/>
</dbReference>
<dbReference type="GO" id="GO:0005764">
    <property type="term" value="C:lysosome"/>
    <property type="evidence" value="ECO:0007669"/>
    <property type="project" value="InterPro"/>
</dbReference>
<dbReference type="GO" id="GO:0016020">
    <property type="term" value="C:membrane"/>
    <property type="evidence" value="ECO:0007669"/>
    <property type="project" value="GOC"/>
</dbReference>
<dbReference type="GO" id="GO:0007585">
    <property type="term" value="P:respiratory gaseous exchange by respiratory system"/>
    <property type="evidence" value="ECO:0007669"/>
    <property type="project" value="UniProtKB-KW"/>
</dbReference>
<dbReference type="GO" id="GO:0006665">
    <property type="term" value="P:sphingolipid metabolic process"/>
    <property type="evidence" value="ECO:0007669"/>
    <property type="project" value="InterPro"/>
</dbReference>
<dbReference type="FunFam" id="1.10.225.10:FF:000008">
    <property type="entry name" value="Pulmonary surfactant-associated protein B"/>
    <property type="match status" value="1"/>
</dbReference>
<dbReference type="FunFam" id="1.10.225.10:FF:000011">
    <property type="entry name" value="Pulmonary surfactant-associated protein B"/>
    <property type="match status" value="1"/>
</dbReference>
<dbReference type="Gene3D" id="1.10.225.10">
    <property type="entry name" value="Saposin-like"/>
    <property type="match status" value="2"/>
</dbReference>
<dbReference type="InterPro" id="IPR003119">
    <property type="entry name" value="SAP_A"/>
</dbReference>
<dbReference type="InterPro" id="IPR007856">
    <property type="entry name" value="SapB_1"/>
</dbReference>
<dbReference type="InterPro" id="IPR008138">
    <property type="entry name" value="SapB_2"/>
</dbReference>
<dbReference type="InterPro" id="IPR008373">
    <property type="entry name" value="Saposin"/>
</dbReference>
<dbReference type="InterPro" id="IPR011001">
    <property type="entry name" value="Saposin-like"/>
</dbReference>
<dbReference type="InterPro" id="IPR008139">
    <property type="entry name" value="SaposinB_dom"/>
</dbReference>
<dbReference type="InterPro" id="IPR051428">
    <property type="entry name" value="Sphingo_Act-Surfact_Prot"/>
</dbReference>
<dbReference type="PANTHER" id="PTHR11480:SF33">
    <property type="entry name" value="PULMONARY SURFACTANT-ASSOCIATED PROTEIN B"/>
    <property type="match status" value="1"/>
</dbReference>
<dbReference type="PANTHER" id="PTHR11480">
    <property type="entry name" value="SAPOSIN-RELATED"/>
    <property type="match status" value="1"/>
</dbReference>
<dbReference type="Pfam" id="PF02199">
    <property type="entry name" value="SapA"/>
    <property type="match status" value="1"/>
</dbReference>
<dbReference type="Pfam" id="PF05184">
    <property type="entry name" value="SapB_1"/>
    <property type="match status" value="1"/>
</dbReference>
<dbReference type="Pfam" id="PF03489">
    <property type="entry name" value="SapB_2"/>
    <property type="match status" value="2"/>
</dbReference>
<dbReference type="PRINTS" id="PR01797">
    <property type="entry name" value="SAPOSIN"/>
</dbReference>
<dbReference type="SMART" id="SM00162">
    <property type="entry name" value="SAPA"/>
    <property type="match status" value="1"/>
</dbReference>
<dbReference type="SMART" id="SM00741">
    <property type="entry name" value="SapB"/>
    <property type="match status" value="3"/>
</dbReference>
<dbReference type="SUPFAM" id="SSF47862">
    <property type="entry name" value="Saposin"/>
    <property type="match status" value="3"/>
</dbReference>
<dbReference type="PROSITE" id="PS51110">
    <property type="entry name" value="SAP_A"/>
    <property type="match status" value="1"/>
</dbReference>
<dbReference type="PROSITE" id="PS50015">
    <property type="entry name" value="SAP_B"/>
    <property type="match status" value="3"/>
</dbReference>
<keyword id="KW-0002">3D-structure</keyword>
<keyword id="KW-1015">Disulfide bond</keyword>
<keyword id="KW-0305">Gaseous exchange</keyword>
<keyword id="KW-0325">Glycoprotein</keyword>
<keyword id="KW-1185">Reference proteome</keyword>
<keyword id="KW-0677">Repeat</keyword>
<keyword id="KW-0964">Secreted</keyword>
<keyword id="KW-0732">Signal</keyword>
<keyword id="KW-0767">Surface film</keyword>
<reference key="1">
    <citation type="journal article" date="1995" name="Am. J. Physiol.">
        <title>Structure and function of the mouse surfactant protein B gene.</title>
        <authorList>
            <person name="Bruno M.A."/>
            <person name="Bohinski R.J."/>
            <person name="Carter J.E."/>
            <person name="Foss K.A."/>
            <person name="Whitsett J.A."/>
        </authorList>
    </citation>
    <scope>NUCLEOTIDE SEQUENCE [GENOMIC DNA]</scope>
    <source>
        <strain>DBA/2J</strain>
        <tissue>Liver</tissue>
    </source>
</reference>
<reference key="2">
    <citation type="journal article" date="2010" name="Cell">
        <title>A tissue-specific atlas of mouse protein phosphorylation and expression.</title>
        <authorList>
            <person name="Huttlin E.L."/>
            <person name="Jedrychowski M.P."/>
            <person name="Elias J.E."/>
            <person name="Goswami T."/>
            <person name="Rad R."/>
            <person name="Beausoleil S.A."/>
            <person name="Villen J."/>
            <person name="Haas W."/>
            <person name="Sowa M.E."/>
            <person name="Gygi S.P."/>
        </authorList>
    </citation>
    <scope>IDENTIFICATION BY MASS SPECTROMETRY [LARGE SCALE ANALYSIS]</scope>
    <source>
        <tissue>Lung</tissue>
    </source>
</reference>
<evidence type="ECO:0000255" key="1"/>
<evidence type="ECO:0000255" key="2">
    <source>
        <dbReference type="PROSITE-ProRule" id="PRU00414"/>
    </source>
</evidence>
<evidence type="ECO:0000255" key="3">
    <source>
        <dbReference type="PROSITE-ProRule" id="PRU00415"/>
    </source>
</evidence>
<evidence type="ECO:0007829" key="4">
    <source>
        <dbReference type="PDB" id="6VZ0"/>
    </source>
</evidence>
<evidence type="ECO:0007829" key="5">
    <source>
        <dbReference type="PDB" id="6VZD"/>
    </source>
</evidence>
<sequence>MAKSHLLQWLLLLPTLCCPGAAITSASSLECAQGPQFWCQSLEHAVQCRALGHCLQEVWGHAGANDLCQECEDIVHLLTKMTKEDAFQEAIRKFLEQECDILPLKLLVPRCRQVLDVYLPLVIDYFQSQINPKAICNHVGLCPRGQAKPEQNPGMPDAVPNPLLDKLVLPVLPGALLARPGPHTQDFSEQQLPIPLPFCWLCRTLIKRVQAVIPKGVLAVAVSQVCHVVPLVVGGICQCLAERYTVLLLDALLGRVVPQLVCGLVLRCSTEDAMGPALPAVEPLIEEWPLQDTECHFCKSVINQAWNTSEQAMPQAMHQACLRFWLDRQKCEQFVEQHMPQLLALVPRSQDAHITCQALGVCEAPASPLQCFQTPHL</sequence>
<feature type="signal peptide" evidence="1">
    <location>
        <begin position="1"/>
        <end position="22"/>
    </location>
</feature>
<feature type="propeptide" id="PRO_0000031650">
    <location>
        <begin position="23"/>
        <end position="191"/>
    </location>
</feature>
<feature type="chain" id="PRO_0000031651" description="Pulmonary surfactant-associated protein B">
    <location>
        <begin position="192"/>
        <end position="270"/>
    </location>
</feature>
<feature type="propeptide" id="PRO_0000031652">
    <location>
        <begin position="271"/>
        <end position="377"/>
    </location>
</feature>
<feature type="domain" description="Saposin A-type" evidence="2">
    <location>
        <begin position="24"/>
        <end position="64"/>
    </location>
</feature>
<feature type="domain" description="Saposin B-type 1" evidence="3">
    <location>
        <begin position="64"/>
        <end position="146"/>
    </location>
</feature>
<feature type="domain" description="Saposin B-type 2" evidence="3">
    <location>
        <begin position="195"/>
        <end position="272"/>
    </location>
</feature>
<feature type="domain" description="Saposin B-type 3" evidence="3">
    <location>
        <begin position="291"/>
        <end position="366"/>
    </location>
</feature>
<feature type="glycosylation site" description="N-linked (GlcNAc...) asparagine" evidence="3">
    <location>
        <position position="307"/>
    </location>
</feature>
<feature type="disulfide bond" evidence="3">
    <location>
        <begin position="68"/>
        <end position="142"/>
    </location>
</feature>
<feature type="disulfide bond" evidence="3">
    <location>
        <begin position="71"/>
        <end position="136"/>
    </location>
</feature>
<feature type="disulfide bond" evidence="3">
    <location>
        <begin position="99"/>
        <end position="111"/>
    </location>
</feature>
<feature type="disulfide bond" evidence="3">
    <location>
        <begin position="199"/>
        <end position="268"/>
    </location>
</feature>
<feature type="disulfide bond" evidence="3">
    <location>
        <begin position="202"/>
        <end position="262"/>
    </location>
</feature>
<feature type="disulfide bond" evidence="3">
    <location>
        <begin position="226"/>
        <end position="237"/>
    </location>
</feature>
<feature type="disulfide bond" description="Interchain" evidence="3">
    <location>
        <position position="239"/>
    </location>
</feature>
<feature type="disulfide bond" evidence="3">
    <location>
        <begin position="295"/>
        <end position="362"/>
    </location>
</feature>
<feature type="disulfide bond" evidence="3">
    <location>
        <begin position="298"/>
        <end position="356"/>
    </location>
</feature>
<feature type="disulfide bond" evidence="3">
    <location>
        <begin position="321"/>
        <end position="331"/>
    </location>
</feature>
<feature type="helix" evidence="5">
    <location>
        <begin position="67"/>
        <end position="81"/>
    </location>
</feature>
<feature type="helix" evidence="5">
    <location>
        <begin position="85"/>
        <end position="99"/>
    </location>
</feature>
<feature type="helix" evidence="5">
    <location>
        <begin position="104"/>
        <end position="107"/>
    </location>
</feature>
<feature type="helix" evidence="5">
    <location>
        <begin position="111"/>
        <end position="127"/>
    </location>
</feature>
<feature type="helix" evidence="5">
    <location>
        <begin position="132"/>
        <end position="138"/>
    </location>
</feature>
<feature type="helix" evidence="4">
    <location>
        <begin position="293"/>
        <end position="324"/>
    </location>
</feature>
<feature type="helix" evidence="4">
    <location>
        <begin position="328"/>
        <end position="337"/>
    </location>
</feature>
<feature type="helix" evidence="4">
    <location>
        <begin position="340"/>
        <end position="343"/>
    </location>
</feature>
<feature type="helix" evidence="4">
    <location>
        <begin position="349"/>
        <end position="358"/>
    </location>
</feature>
<proteinExistence type="evidence at protein level"/>